<feature type="chain" id="PRO_1000095619" description="Protein NrdI">
    <location>
        <begin position="1"/>
        <end position="136"/>
    </location>
</feature>
<proteinExistence type="inferred from homology"/>
<gene>
    <name evidence="1" type="primary">nrdI</name>
    <name type="ordered locus">ECH74115_3918</name>
</gene>
<protein>
    <recommendedName>
        <fullName evidence="1">Protein NrdI</fullName>
    </recommendedName>
</protein>
<reference key="1">
    <citation type="journal article" date="2011" name="Proc. Natl. Acad. Sci. U.S.A.">
        <title>Genomic anatomy of Escherichia coli O157:H7 outbreaks.</title>
        <authorList>
            <person name="Eppinger M."/>
            <person name="Mammel M.K."/>
            <person name="Leclerc J.E."/>
            <person name="Ravel J."/>
            <person name="Cebula T.A."/>
        </authorList>
    </citation>
    <scope>NUCLEOTIDE SEQUENCE [LARGE SCALE GENOMIC DNA]</scope>
    <source>
        <strain>EC4115 / EHEC</strain>
    </source>
</reference>
<sequence length="136" mass="15340">MSQLVYFSSSSENTQRFIERLGLPAVRIPLNERERIQVDEPYILIVPSYGGGGTAGAVPRQVIRFLNDEHNRALLRGVIASGNRNFGEAYGRAGDVIARKCGVPWLYRFELMGTQSDIENVRKGVTEFWQRQPQNA</sequence>
<evidence type="ECO:0000255" key="1">
    <source>
        <dbReference type="HAMAP-Rule" id="MF_00128"/>
    </source>
</evidence>
<accession>B5Z288</accession>
<name>NRDI_ECO5E</name>
<dbReference type="EMBL" id="CP001164">
    <property type="protein sequence ID" value="ACI36425.1"/>
    <property type="molecule type" value="Genomic_DNA"/>
</dbReference>
<dbReference type="RefSeq" id="WP_000080947.1">
    <property type="nucleotide sequence ID" value="NC_011353.1"/>
</dbReference>
<dbReference type="SMR" id="B5Z288"/>
<dbReference type="GeneID" id="75172757"/>
<dbReference type="KEGG" id="ecf:ECH74115_3918"/>
<dbReference type="HOGENOM" id="CLU_114845_0_0_6"/>
<dbReference type="GO" id="GO:0010181">
    <property type="term" value="F:FMN binding"/>
    <property type="evidence" value="ECO:0007669"/>
    <property type="project" value="InterPro"/>
</dbReference>
<dbReference type="GO" id="GO:0036211">
    <property type="term" value="P:protein modification process"/>
    <property type="evidence" value="ECO:0007669"/>
    <property type="project" value="InterPro"/>
</dbReference>
<dbReference type="FunFam" id="3.40.50.360:FF:000005">
    <property type="entry name" value="Protein NrdI"/>
    <property type="match status" value="1"/>
</dbReference>
<dbReference type="Gene3D" id="3.40.50.360">
    <property type="match status" value="1"/>
</dbReference>
<dbReference type="HAMAP" id="MF_00128">
    <property type="entry name" value="NrdI"/>
    <property type="match status" value="1"/>
</dbReference>
<dbReference type="InterPro" id="IPR029039">
    <property type="entry name" value="Flavoprotein-like_sf"/>
</dbReference>
<dbReference type="InterPro" id="IPR020852">
    <property type="entry name" value="RNR_Ib_NrdI_bac"/>
</dbReference>
<dbReference type="InterPro" id="IPR004465">
    <property type="entry name" value="RNR_NrdI"/>
</dbReference>
<dbReference type="NCBIfam" id="TIGR00333">
    <property type="entry name" value="nrdI"/>
    <property type="match status" value="1"/>
</dbReference>
<dbReference type="PANTHER" id="PTHR37297">
    <property type="entry name" value="PROTEIN NRDI"/>
    <property type="match status" value="1"/>
</dbReference>
<dbReference type="PANTHER" id="PTHR37297:SF1">
    <property type="entry name" value="PROTEIN NRDI"/>
    <property type="match status" value="1"/>
</dbReference>
<dbReference type="Pfam" id="PF07972">
    <property type="entry name" value="Flavodoxin_NdrI"/>
    <property type="match status" value="1"/>
</dbReference>
<dbReference type="PIRSF" id="PIRSF005087">
    <property type="entry name" value="NrdI"/>
    <property type="match status" value="1"/>
</dbReference>
<dbReference type="SUPFAM" id="SSF52218">
    <property type="entry name" value="Flavoproteins"/>
    <property type="match status" value="1"/>
</dbReference>
<organism>
    <name type="scientific">Escherichia coli O157:H7 (strain EC4115 / EHEC)</name>
    <dbReference type="NCBI Taxonomy" id="444450"/>
    <lineage>
        <taxon>Bacteria</taxon>
        <taxon>Pseudomonadati</taxon>
        <taxon>Pseudomonadota</taxon>
        <taxon>Gammaproteobacteria</taxon>
        <taxon>Enterobacterales</taxon>
        <taxon>Enterobacteriaceae</taxon>
        <taxon>Escherichia</taxon>
    </lineage>
</organism>
<comment type="function">
    <text evidence="1">Probably involved in ribonucleotide reductase function.</text>
</comment>
<comment type="similarity">
    <text evidence="1">Belongs to the NrdI family.</text>
</comment>